<accession>Q9JHK7</accession>
<feature type="signal peptide" evidence="4">
    <location>
        <begin position="1"/>
        <end position="18"/>
    </location>
</feature>
<feature type="chain" id="PRO_0000015365" description="Interleukin-10">
    <location>
        <begin position="19"/>
        <end position="178"/>
    </location>
</feature>
<feature type="glycosylation site" description="N-linked (GlcNAc...) asparagine" evidence="4">
    <location>
        <position position="134"/>
    </location>
</feature>
<feature type="disulfide bond" evidence="1">
    <location>
        <begin position="30"/>
        <end position="126"/>
    </location>
</feature>
<feature type="disulfide bond" evidence="1">
    <location>
        <begin position="80"/>
        <end position="132"/>
    </location>
</feature>
<dbReference type="EMBL" id="AF012909">
    <property type="protein sequence ID" value="AAF34862.1"/>
    <property type="molecule type" value="mRNA"/>
</dbReference>
<dbReference type="EMBL" id="AF120030">
    <property type="protein sequence ID" value="AAF28855.1"/>
    <property type="molecule type" value="Genomic_DNA"/>
</dbReference>
<dbReference type="SMR" id="Q9JHK7"/>
<dbReference type="GlyCosmos" id="Q9JHK7">
    <property type="glycosylation" value="1 site, No reported glycans"/>
</dbReference>
<dbReference type="GO" id="GO:0005615">
    <property type="term" value="C:extracellular space"/>
    <property type="evidence" value="ECO:0000250"/>
    <property type="project" value="UniProtKB"/>
</dbReference>
<dbReference type="GO" id="GO:0005125">
    <property type="term" value="F:cytokine activity"/>
    <property type="evidence" value="ECO:0007669"/>
    <property type="project" value="UniProtKB-KW"/>
</dbReference>
<dbReference type="GO" id="GO:0006955">
    <property type="term" value="P:immune response"/>
    <property type="evidence" value="ECO:0007669"/>
    <property type="project" value="InterPro"/>
</dbReference>
<dbReference type="GO" id="GO:0030889">
    <property type="term" value="P:negative regulation of B cell proliferation"/>
    <property type="evidence" value="ECO:0000250"/>
    <property type="project" value="UniProtKB"/>
</dbReference>
<dbReference type="GO" id="GO:0002719">
    <property type="term" value="P:negative regulation of cytokine production involved in immune response"/>
    <property type="evidence" value="ECO:0000250"/>
    <property type="project" value="UniProtKB"/>
</dbReference>
<dbReference type="GO" id="GO:0050728">
    <property type="term" value="P:negative regulation of inflammatory response"/>
    <property type="evidence" value="ECO:0000250"/>
    <property type="project" value="UniProtKB"/>
</dbReference>
<dbReference type="GO" id="GO:0032715">
    <property type="term" value="P:negative regulation of interleukin-6 production"/>
    <property type="evidence" value="ECO:0000250"/>
    <property type="project" value="UniProtKB"/>
</dbReference>
<dbReference type="GO" id="GO:0051045">
    <property type="term" value="P:negative regulation of membrane protein ectodomain proteolysis"/>
    <property type="evidence" value="ECO:0000250"/>
    <property type="project" value="UniProtKB"/>
</dbReference>
<dbReference type="GO" id="GO:0002904">
    <property type="term" value="P:positive regulation of B cell apoptotic process"/>
    <property type="evidence" value="ECO:0000250"/>
    <property type="project" value="UniProtKB"/>
</dbReference>
<dbReference type="GO" id="GO:0001819">
    <property type="term" value="P:positive regulation of cytokine production"/>
    <property type="evidence" value="ECO:0000250"/>
    <property type="project" value="UniProtKB"/>
</dbReference>
<dbReference type="GO" id="GO:0051091">
    <property type="term" value="P:positive regulation of DNA-binding transcription factor activity"/>
    <property type="evidence" value="ECO:0000250"/>
    <property type="project" value="UniProtKB"/>
</dbReference>
<dbReference type="GO" id="GO:0045893">
    <property type="term" value="P:positive regulation of DNA-templated transcription"/>
    <property type="evidence" value="ECO:0000250"/>
    <property type="project" value="UniProtKB"/>
</dbReference>
<dbReference type="GO" id="GO:0051384">
    <property type="term" value="P:response to glucocorticoid"/>
    <property type="evidence" value="ECO:0000250"/>
    <property type="project" value="UniProtKB"/>
</dbReference>
<dbReference type="GO" id="GO:0002237">
    <property type="term" value="P:response to molecule of bacterial origin"/>
    <property type="evidence" value="ECO:0000250"/>
    <property type="project" value="UniProtKB"/>
</dbReference>
<dbReference type="FunFam" id="1.20.1250.10:FF:000011">
    <property type="entry name" value="Interleukin-10"/>
    <property type="match status" value="1"/>
</dbReference>
<dbReference type="Gene3D" id="1.20.1250.10">
    <property type="match status" value="1"/>
</dbReference>
<dbReference type="InterPro" id="IPR009079">
    <property type="entry name" value="4_helix_cytokine-like_core"/>
</dbReference>
<dbReference type="InterPro" id="IPR000098">
    <property type="entry name" value="IL-10"/>
</dbReference>
<dbReference type="InterPro" id="IPR020443">
    <property type="entry name" value="IL-10/19/20/24/26"/>
</dbReference>
<dbReference type="InterPro" id="IPR020423">
    <property type="entry name" value="IL-10_CS"/>
</dbReference>
<dbReference type="PANTHER" id="PTHR48482:SF5">
    <property type="entry name" value="INTERLEUKIN-10"/>
    <property type="match status" value="1"/>
</dbReference>
<dbReference type="PANTHER" id="PTHR48482">
    <property type="entry name" value="INTERLEUKIN-19-RELATED"/>
    <property type="match status" value="1"/>
</dbReference>
<dbReference type="Pfam" id="PF00726">
    <property type="entry name" value="IL10"/>
    <property type="match status" value="1"/>
</dbReference>
<dbReference type="PRINTS" id="PR01294">
    <property type="entry name" value="INTRLEUKIN10"/>
</dbReference>
<dbReference type="SMART" id="SM00188">
    <property type="entry name" value="IL10"/>
    <property type="match status" value="1"/>
</dbReference>
<dbReference type="SUPFAM" id="SSF47266">
    <property type="entry name" value="4-helical cytokines"/>
    <property type="match status" value="1"/>
</dbReference>
<dbReference type="PROSITE" id="PS00520">
    <property type="entry name" value="INTERLEUKIN_10"/>
    <property type="match status" value="1"/>
</dbReference>
<evidence type="ECO:0000250" key="1"/>
<evidence type="ECO:0000250" key="2">
    <source>
        <dbReference type="UniProtKB" id="P18893"/>
    </source>
</evidence>
<evidence type="ECO:0000250" key="3">
    <source>
        <dbReference type="UniProtKB" id="P22301"/>
    </source>
</evidence>
<evidence type="ECO:0000255" key="4"/>
<evidence type="ECO:0000305" key="5"/>
<name>IL10_MARMO</name>
<reference key="1">
    <citation type="submission" date="1999-01" db="EMBL/GenBank/DDBJ databases">
        <title>The woodchuck interleukin-10 gene: cloning and structural analysis.</title>
        <authorList>
            <person name="Li D.H."/>
            <person name="Cullen J.M."/>
        </authorList>
    </citation>
    <scope>NUCLEOTIDE SEQUENCE</scope>
    <source>
        <tissue>Peripheral blood</tissue>
    </source>
</reference>
<gene>
    <name type="primary">IL10</name>
    <name type="synonym">IL-10</name>
</gene>
<proteinExistence type="evidence at transcript level"/>
<sequence>MPNPVLLYCLVLLAGMGTSQGENTQSEETCTHFPGGLPHMLRELRAAFGRVKIFFQTKDQLDDMLLSESLLEDFKGYLGCQALSEMIQFYLVEVMPQAENHSPDVKEHVNSLGEKLKTLRLRLRRCHRFLPCENKSKAVQQVKDAFSKLQEKGIYKAMSEFDIFINYIEAYMTAKINS</sequence>
<protein>
    <recommendedName>
        <fullName>Interleukin-10</fullName>
        <shortName>IL-10</shortName>
    </recommendedName>
    <alternativeName>
        <fullName>Cytokine synthesis inhibitory factor</fullName>
        <shortName>CSIF</shortName>
    </alternativeName>
</protein>
<comment type="function">
    <text evidence="2 3">Major immune regulatory cytokine that acts on many cells of the immune system where it has profound anti-inflammatory functions, limiting excessive tissue disruption caused by inflammation. Mechanistically, IL10 binds to its heterotetrameric receptor comprising IL10RA and IL10RB leading to JAK1 and STAT2-mediated phosphorylation of STAT3. In turn, STAT3 translocates to the nucleus where it drives expression of anti-inflammatory mediators. Targets antigen-presenting cells (APCs) such as macrophages and monocytes and inhibits their release of pro-inflammatory cytokines including granulocyte-macrophage colony-stimulating factor /GM-CSF, granulocyte colony-stimulating factor/G-CSF, IL-1 alpha, IL-1 beta, IL-6, IL-8 and TNF-alpha. Also interferes with antigen presentation by reducing the expression of MHC-class II and co-stimulatory molecules, thereby inhibiting their ability to induce T cell activation (By similarity). In addition, controls the inflammatory response of macrophages by reprogramming essential metabolic pathways including mTOR signaling (By similarity).</text>
</comment>
<comment type="subunit">
    <text evidence="3">Homodimer. Interacts with IL10RA and IL10RB.</text>
</comment>
<comment type="subcellular location">
    <subcellularLocation>
        <location evidence="3">Secreted</location>
    </subcellularLocation>
</comment>
<comment type="similarity">
    <text evidence="5">Belongs to the IL-10 family.</text>
</comment>
<keyword id="KW-0202">Cytokine</keyword>
<keyword id="KW-1015">Disulfide bond</keyword>
<keyword id="KW-0325">Glycoprotein</keyword>
<keyword id="KW-0964">Secreted</keyword>
<keyword id="KW-0732">Signal</keyword>
<organism>
    <name type="scientific">Marmota monax</name>
    <name type="common">Woodchuck</name>
    <dbReference type="NCBI Taxonomy" id="9995"/>
    <lineage>
        <taxon>Eukaryota</taxon>
        <taxon>Metazoa</taxon>
        <taxon>Chordata</taxon>
        <taxon>Craniata</taxon>
        <taxon>Vertebrata</taxon>
        <taxon>Euteleostomi</taxon>
        <taxon>Mammalia</taxon>
        <taxon>Eutheria</taxon>
        <taxon>Euarchontoglires</taxon>
        <taxon>Glires</taxon>
        <taxon>Rodentia</taxon>
        <taxon>Sciuromorpha</taxon>
        <taxon>Sciuridae</taxon>
        <taxon>Xerinae</taxon>
        <taxon>Marmotini</taxon>
        <taxon>Marmota</taxon>
    </lineage>
</organism>